<name>AMPA_LEGPA</name>
<proteinExistence type="inferred from homology"/>
<sequence length="483" mass="52481">MNYGLTHTPSLTTSECLVLGVFSDLALPDFATAIDNEQQGLIKKLCQRVPEPGNTVWQTDVEGHSLLIIQCGKKEEFSANSLQKRVGEITEALIKQRFSSATVCLPRLNQESAEWQLEQMIVQIDNLRYQLLDFKTKHAKSHKLESVIFHLPGATEKSLEMAKAIVTGVEFCRDLANMPANICTPTYLGEQAISLSKQFDQISCQVIGPEEIKEMGMGALLAVAQGSDQPPRLIDIHYHGNKNSAPVILVGKGITFDSGGLSIKPANAMDEMKYDMSGAASVLGVIKACALLKLPINLIGIIASAENLISGSAVKSGDIVTTMSGQTVEIINTDAEGRLVLADALTYAERYNPDFVIDIATLTGAIIVALGNIATGYMTRDEQLAKSIECAANESQDKVWRMPLDEAYQDALESPLADMINAGFDRSAGSITAACFLSRFTEKYRWAHLDIAGTAWISGKKRNATGRPVPLLIQLLRHVANSR</sequence>
<accession>Q5X1Q9</accession>
<reference key="1">
    <citation type="journal article" date="2004" name="Nat. Genet.">
        <title>Evidence in the Legionella pneumophila genome for exploitation of host cell functions and high genome plasticity.</title>
        <authorList>
            <person name="Cazalet C."/>
            <person name="Rusniok C."/>
            <person name="Brueggemann H."/>
            <person name="Zidane N."/>
            <person name="Magnier A."/>
            <person name="Ma L."/>
            <person name="Tichit M."/>
            <person name="Jarraud S."/>
            <person name="Bouchier C."/>
            <person name="Vandenesch F."/>
            <person name="Kunst F."/>
            <person name="Etienne J."/>
            <person name="Glaser P."/>
            <person name="Buchrieser C."/>
        </authorList>
    </citation>
    <scope>NUCLEOTIDE SEQUENCE [LARGE SCALE GENOMIC DNA]</scope>
    <source>
        <strain>Paris</strain>
    </source>
</reference>
<organism>
    <name type="scientific">Legionella pneumophila (strain Paris)</name>
    <dbReference type="NCBI Taxonomy" id="297246"/>
    <lineage>
        <taxon>Bacteria</taxon>
        <taxon>Pseudomonadati</taxon>
        <taxon>Pseudomonadota</taxon>
        <taxon>Gammaproteobacteria</taxon>
        <taxon>Legionellales</taxon>
        <taxon>Legionellaceae</taxon>
        <taxon>Legionella</taxon>
    </lineage>
</organism>
<keyword id="KW-0031">Aminopeptidase</keyword>
<keyword id="KW-0963">Cytoplasm</keyword>
<keyword id="KW-0378">Hydrolase</keyword>
<keyword id="KW-0464">Manganese</keyword>
<keyword id="KW-0479">Metal-binding</keyword>
<keyword id="KW-0645">Protease</keyword>
<feature type="chain" id="PRO_1000203832" description="Probable cytosol aminopeptidase">
    <location>
        <begin position="1"/>
        <end position="483"/>
    </location>
</feature>
<feature type="active site" evidence="1">
    <location>
        <position position="264"/>
    </location>
</feature>
<feature type="active site" evidence="1">
    <location>
        <position position="338"/>
    </location>
</feature>
<feature type="binding site" evidence="1">
    <location>
        <position position="252"/>
    </location>
    <ligand>
        <name>Mn(2+)</name>
        <dbReference type="ChEBI" id="CHEBI:29035"/>
        <label>2</label>
    </ligand>
</feature>
<feature type="binding site" evidence="1">
    <location>
        <position position="257"/>
    </location>
    <ligand>
        <name>Mn(2+)</name>
        <dbReference type="ChEBI" id="CHEBI:29035"/>
        <label>1</label>
    </ligand>
</feature>
<feature type="binding site" evidence="1">
    <location>
        <position position="257"/>
    </location>
    <ligand>
        <name>Mn(2+)</name>
        <dbReference type="ChEBI" id="CHEBI:29035"/>
        <label>2</label>
    </ligand>
</feature>
<feature type="binding site" evidence="1">
    <location>
        <position position="275"/>
    </location>
    <ligand>
        <name>Mn(2+)</name>
        <dbReference type="ChEBI" id="CHEBI:29035"/>
        <label>2</label>
    </ligand>
</feature>
<feature type="binding site" evidence="1">
    <location>
        <position position="334"/>
    </location>
    <ligand>
        <name>Mn(2+)</name>
        <dbReference type="ChEBI" id="CHEBI:29035"/>
        <label>1</label>
    </ligand>
</feature>
<feature type="binding site" evidence="1">
    <location>
        <position position="336"/>
    </location>
    <ligand>
        <name>Mn(2+)</name>
        <dbReference type="ChEBI" id="CHEBI:29035"/>
        <label>1</label>
    </ligand>
</feature>
<feature type="binding site" evidence="1">
    <location>
        <position position="336"/>
    </location>
    <ligand>
        <name>Mn(2+)</name>
        <dbReference type="ChEBI" id="CHEBI:29035"/>
        <label>2</label>
    </ligand>
</feature>
<evidence type="ECO:0000255" key="1">
    <source>
        <dbReference type="HAMAP-Rule" id="MF_00181"/>
    </source>
</evidence>
<dbReference type="EC" id="3.4.11.1" evidence="1"/>
<dbReference type="EC" id="3.4.11.10" evidence="1"/>
<dbReference type="EMBL" id="CR628336">
    <property type="protein sequence ID" value="CAH13837.1"/>
    <property type="molecule type" value="Genomic_DNA"/>
</dbReference>
<dbReference type="RefSeq" id="WP_015961715.1">
    <property type="nucleotide sequence ID" value="NC_006368.1"/>
</dbReference>
<dbReference type="SMR" id="Q5X1Q9"/>
<dbReference type="MEROPS" id="M17.003"/>
<dbReference type="KEGG" id="lpp:lpp2684"/>
<dbReference type="LegioList" id="lpp2684"/>
<dbReference type="HOGENOM" id="CLU_013734_0_1_6"/>
<dbReference type="GO" id="GO:0005737">
    <property type="term" value="C:cytoplasm"/>
    <property type="evidence" value="ECO:0007669"/>
    <property type="project" value="UniProtKB-SubCell"/>
</dbReference>
<dbReference type="GO" id="GO:0030145">
    <property type="term" value="F:manganese ion binding"/>
    <property type="evidence" value="ECO:0007669"/>
    <property type="project" value="UniProtKB-UniRule"/>
</dbReference>
<dbReference type="GO" id="GO:0070006">
    <property type="term" value="F:metalloaminopeptidase activity"/>
    <property type="evidence" value="ECO:0007669"/>
    <property type="project" value="InterPro"/>
</dbReference>
<dbReference type="GO" id="GO:0006508">
    <property type="term" value="P:proteolysis"/>
    <property type="evidence" value="ECO:0007669"/>
    <property type="project" value="UniProtKB-KW"/>
</dbReference>
<dbReference type="CDD" id="cd00433">
    <property type="entry name" value="Peptidase_M17"/>
    <property type="match status" value="1"/>
</dbReference>
<dbReference type="Gene3D" id="3.40.220.10">
    <property type="entry name" value="Leucine Aminopeptidase, subunit E, domain 1"/>
    <property type="match status" value="1"/>
</dbReference>
<dbReference type="Gene3D" id="3.40.630.10">
    <property type="entry name" value="Zn peptidases"/>
    <property type="match status" value="1"/>
</dbReference>
<dbReference type="HAMAP" id="MF_00181">
    <property type="entry name" value="Cytosol_peptidase_M17"/>
    <property type="match status" value="1"/>
</dbReference>
<dbReference type="InterPro" id="IPR011356">
    <property type="entry name" value="Leucine_aapep/pepB"/>
</dbReference>
<dbReference type="InterPro" id="IPR043472">
    <property type="entry name" value="Macro_dom-like"/>
</dbReference>
<dbReference type="InterPro" id="IPR000819">
    <property type="entry name" value="Peptidase_M17_C"/>
</dbReference>
<dbReference type="InterPro" id="IPR023042">
    <property type="entry name" value="Peptidase_M17_leu_NH2_pept"/>
</dbReference>
<dbReference type="InterPro" id="IPR008283">
    <property type="entry name" value="Peptidase_M17_N"/>
</dbReference>
<dbReference type="NCBIfam" id="NF002074">
    <property type="entry name" value="PRK00913.1-4"/>
    <property type="match status" value="1"/>
</dbReference>
<dbReference type="PANTHER" id="PTHR11963:SF23">
    <property type="entry name" value="CYTOSOL AMINOPEPTIDASE"/>
    <property type="match status" value="1"/>
</dbReference>
<dbReference type="PANTHER" id="PTHR11963">
    <property type="entry name" value="LEUCINE AMINOPEPTIDASE-RELATED"/>
    <property type="match status" value="1"/>
</dbReference>
<dbReference type="Pfam" id="PF00883">
    <property type="entry name" value="Peptidase_M17"/>
    <property type="match status" value="1"/>
</dbReference>
<dbReference type="Pfam" id="PF02789">
    <property type="entry name" value="Peptidase_M17_N"/>
    <property type="match status" value="1"/>
</dbReference>
<dbReference type="PRINTS" id="PR00481">
    <property type="entry name" value="LAMNOPPTDASE"/>
</dbReference>
<dbReference type="SUPFAM" id="SSF52949">
    <property type="entry name" value="Macro domain-like"/>
    <property type="match status" value="1"/>
</dbReference>
<dbReference type="SUPFAM" id="SSF53187">
    <property type="entry name" value="Zn-dependent exopeptidases"/>
    <property type="match status" value="1"/>
</dbReference>
<dbReference type="PROSITE" id="PS00631">
    <property type="entry name" value="CYTOSOL_AP"/>
    <property type="match status" value="1"/>
</dbReference>
<comment type="function">
    <text evidence="1">Presumably involved in the processing and regular turnover of intracellular proteins. Catalyzes the removal of unsubstituted N-terminal amino acids from various peptides.</text>
</comment>
<comment type="catalytic activity">
    <reaction evidence="1">
        <text>Release of an N-terminal amino acid, Xaa-|-Yaa-, in which Xaa is preferably Leu, but may be other amino acids including Pro although not Arg or Lys, and Yaa may be Pro. Amino acid amides and methyl esters are also readily hydrolyzed, but rates on arylamides are exceedingly low.</text>
        <dbReference type="EC" id="3.4.11.1"/>
    </reaction>
</comment>
<comment type="catalytic activity">
    <reaction evidence="1">
        <text>Release of an N-terminal amino acid, preferentially leucine, but not glutamic or aspartic acids.</text>
        <dbReference type="EC" id="3.4.11.10"/>
    </reaction>
</comment>
<comment type="cofactor">
    <cofactor evidence="1">
        <name>Mn(2+)</name>
        <dbReference type="ChEBI" id="CHEBI:29035"/>
    </cofactor>
    <text evidence="1">Binds 2 manganese ions per subunit.</text>
</comment>
<comment type="subcellular location">
    <subcellularLocation>
        <location evidence="1">Cytoplasm</location>
    </subcellularLocation>
</comment>
<comment type="similarity">
    <text evidence="1">Belongs to the peptidase M17 family.</text>
</comment>
<gene>
    <name evidence="1" type="primary">pepA</name>
    <name type="ordered locus">lpp2684</name>
</gene>
<protein>
    <recommendedName>
        <fullName evidence="1">Probable cytosol aminopeptidase</fullName>
        <ecNumber evidence="1">3.4.11.1</ecNumber>
    </recommendedName>
    <alternativeName>
        <fullName evidence="1">Leucine aminopeptidase</fullName>
        <shortName evidence="1">LAP</shortName>
        <ecNumber evidence="1">3.4.11.10</ecNumber>
    </alternativeName>
    <alternativeName>
        <fullName evidence="1">Leucyl aminopeptidase</fullName>
    </alternativeName>
</protein>